<evidence type="ECO:0000250" key="1"/>
<evidence type="ECO:0000305" key="2"/>
<accession>Q8THT2</accession>
<keyword id="KW-0484">Methanogenesis</keyword>
<keyword id="KW-0554">One-carbon metabolism</keyword>
<keyword id="KW-0560">Oxidoreductase</keyword>
<keyword id="KW-1185">Reference proteome</keyword>
<feature type="chain" id="PRO_0000075037" description="F420-dependent methylenetetrahydromethanopterin dehydrogenase">
    <location>
        <begin position="1"/>
        <end position="279"/>
    </location>
</feature>
<reference key="1">
    <citation type="journal article" date="2002" name="Genome Res.">
        <title>The genome of Methanosarcina acetivorans reveals extensive metabolic and physiological diversity.</title>
        <authorList>
            <person name="Galagan J.E."/>
            <person name="Nusbaum C."/>
            <person name="Roy A."/>
            <person name="Endrizzi M.G."/>
            <person name="Macdonald P."/>
            <person name="FitzHugh W."/>
            <person name="Calvo S."/>
            <person name="Engels R."/>
            <person name="Smirnov S."/>
            <person name="Atnoor D."/>
            <person name="Brown A."/>
            <person name="Allen N."/>
            <person name="Naylor J."/>
            <person name="Stange-Thomann N."/>
            <person name="DeArellano K."/>
            <person name="Johnson R."/>
            <person name="Linton L."/>
            <person name="McEwan P."/>
            <person name="McKernan K."/>
            <person name="Talamas J."/>
            <person name="Tirrell A."/>
            <person name="Ye W."/>
            <person name="Zimmer A."/>
            <person name="Barber R.D."/>
            <person name="Cann I."/>
            <person name="Graham D.E."/>
            <person name="Grahame D.A."/>
            <person name="Guss A.M."/>
            <person name="Hedderich R."/>
            <person name="Ingram-Smith C."/>
            <person name="Kuettner H.C."/>
            <person name="Krzycki J.A."/>
            <person name="Leigh J.A."/>
            <person name="Li W."/>
            <person name="Liu J."/>
            <person name="Mukhopadhyay B."/>
            <person name="Reeve J.N."/>
            <person name="Smith K."/>
            <person name="Springer T.A."/>
            <person name="Umayam L.A."/>
            <person name="White O."/>
            <person name="White R.H."/>
            <person name="de Macario E.C."/>
            <person name="Ferry J.G."/>
            <person name="Jarrell K.F."/>
            <person name="Jing H."/>
            <person name="Macario A.J.L."/>
            <person name="Paulsen I.T."/>
            <person name="Pritchett M."/>
            <person name="Sowers K.R."/>
            <person name="Swanson R.V."/>
            <person name="Zinder S.H."/>
            <person name="Lander E."/>
            <person name="Metcalf W.W."/>
            <person name="Birren B."/>
        </authorList>
    </citation>
    <scope>NUCLEOTIDE SEQUENCE [LARGE SCALE GENOMIC DNA]</scope>
    <source>
        <strain>ATCC 35395 / DSM 2834 / JCM 12185 / C2A</strain>
    </source>
</reference>
<name>MTD_METAC</name>
<comment type="function">
    <text evidence="1">Catalyzes the reversible reduction of methenyl-H(4)MPT(+) to methylene-H(4)MPT.</text>
</comment>
<comment type="catalytic activity">
    <reaction>
        <text>5,10-methylenetetrahydromethanopterin + oxidized coenzyme F420-(gamma-L-Glu)(n) + 2 H(+) = 5,10-methenyl-5,6,7,8-tetrahydromethanopterin + reduced coenzyme F420-(gamma-L-Glu)(n)</text>
        <dbReference type="Rhea" id="RHEA:16721"/>
        <dbReference type="Rhea" id="RHEA-COMP:12939"/>
        <dbReference type="Rhea" id="RHEA-COMP:14378"/>
        <dbReference type="ChEBI" id="CHEBI:15378"/>
        <dbReference type="ChEBI" id="CHEBI:57818"/>
        <dbReference type="ChEBI" id="CHEBI:58337"/>
        <dbReference type="ChEBI" id="CHEBI:133980"/>
        <dbReference type="ChEBI" id="CHEBI:139511"/>
        <dbReference type="EC" id="1.5.98.1"/>
    </reaction>
</comment>
<comment type="pathway">
    <text>One-carbon metabolism; methanogenesis from CO(2); 5,10-methylene-5,6,7,8-tetrahydromethanopterin from 5,10-methenyl-5,6,7,8-tetrahydromethanopterin (coenzyme F420 route): step 1/1.</text>
</comment>
<comment type="similarity">
    <text evidence="2">Belongs to the MTD family.</text>
</comment>
<proteinExistence type="inferred from homology"/>
<protein>
    <recommendedName>
        <fullName>F420-dependent methylenetetrahydromethanopterin dehydrogenase</fullName>
        <shortName>MTD</shortName>
        <ecNumber>1.5.98.1</ecNumber>
    </recommendedName>
    <alternativeName>
        <fullName>Coenzyme F420-dependent N5,N10-methylenetetrahydromethanopterin dehydrogenase</fullName>
    </alternativeName>
</protein>
<dbReference type="EC" id="1.5.98.1"/>
<dbReference type="EMBL" id="AE010299">
    <property type="protein sequence ID" value="AAM07771.1"/>
    <property type="molecule type" value="Genomic_DNA"/>
</dbReference>
<dbReference type="SMR" id="Q8THT2"/>
<dbReference type="FunCoup" id="Q8THT2">
    <property type="interactions" value="74"/>
</dbReference>
<dbReference type="STRING" id="188937.MA_4430"/>
<dbReference type="EnsemblBacteria" id="AAM07771">
    <property type="protein sequence ID" value="AAM07771"/>
    <property type="gene ID" value="MA_4430"/>
</dbReference>
<dbReference type="KEGG" id="mac:MA_4430"/>
<dbReference type="HOGENOM" id="CLU_1006890_0_0_2"/>
<dbReference type="InParanoid" id="Q8THT2"/>
<dbReference type="PhylomeDB" id="Q8THT2"/>
<dbReference type="UniPathway" id="UPA00640">
    <property type="reaction ID" value="UER00695"/>
</dbReference>
<dbReference type="Proteomes" id="UP000002487">
    <property type="component" value="Chromosome"/>
</dbReference>
<dbReference type="GO" id="GO:0008901">
    <property type="term" value="F:ferredoxin hydrogenase activity"/>
    <property type="evidence" value="ECO:0007669"/>
    <property type="project" value="InterPro"/>
</dbReference>
<dbReference type="GO" id="GO:0030268">
    <property type="term" value="F:methylenetetrahydromethanopterin dehydrogenase activity"/>
    <property type="evidence" value="ECO:0007669"/>
    <property type="project" value="UniProtKB-UniRule"/>
</dbReference>
<dbReference type="GO" id="GO:0019386">
    <property type="term" value="P:methanogenesis, from carbon dioxide"/>
    <property type="evidence" value="ECO:0007669"/>
    <property type="project" value="UniProtKB-UniRule"/>
</dbReference>
<dbReference type="GO" id="GO:0006730">
    <property type="term" value="P:one-carbon metabolic process"/>
    <property type="evidence" value="ECO:0007669"/>
    <property type="project" value="UniProtKB-UniRule"/>
</dbReference>
<dbReference type="Gene3D" id="6.10.140.120">
    <property type="match status" value="1"/>
</dbReference>
<dbReference type="Gene3D" id="3.40.50.10830">
    <property type="entry name" value="F420-dependent methylenetetrahydromethanopterin dehydrogenase (MTD)"/>
    <property type="match status" value="1"/>
</dbReference>
<dbReference type="HAMAP" id="MF_00058">
    <property type="entry name" value="MTD"/>
    <property type="match status" value="1"/>
</dbReference>
<dbReference type="InterPro" id="IPR002844">
    <property type="entry name" value="MTD"/>
</dbReference>
<dbReference type="InterPro" id="IPR036080">
    <property type="entry name" value="MTD_sf"/>
</dbReference>
<dbReference type="NCBIfam" id="NF002162">
    <property type="entry name" value="PRK00994.1"/>
    <property type="match status" value="1"/>
</dbReference>
<dbReference type="Pfam" id="PF01993">
    <property type="entry name" value="MTD"/>
    <property type="match status" value="1"/>
</dbReference>
<dbReference type="PIRSF" id="PIRSF005627">
    <property type="entry name" value="MTD"/>
    <property type="match status" value="1"/>
</dbReference>
<dbReference type="SUPFAM" id="SSF102324">
    <property type="entry name" value="F420-dependent methylenetetrahydromethanopterin dehydrogenase (MTD)"/>
    <property type="match status" value="1"/>
</dbReference>
<gene>
    <name type="primary">mtd</name>
    <name type="ordered locus">MA_4430</name>
</gene>
<organism>
    <name type="scientific">Methanosarcina acetivorans (strain ATCC 35395 / DSM 2834 / JCM 12185 / C2A)</name>
    <dbReference type="NCBI Taxonomy" id="188937"/>
    <lineage>
        <taxon>Archaea</taxon>
        <taxon>Methanobacteriati</taxon>
        <taxon>Methanobacteriota</taxon>
        <taxon>Stenosarchaea group</taxon>
        <taxon>Methanomicrobia</taxon>
        <taxon>Methanosarcinales</taxon>
        <taxon>Methanosarcinaceae</taxon>
        <taxon>Methanosarcina</taxon>
    </lineage>
</organism>
<sequence>MRKMVNIGFIKMGNLGMSQVINLIQDEIAAREGITVRVFGTGAKMGPADAADTESFKQWNADFVVMISPNAAAPGPTAAREIWKDVPCIVVSDGPTKKEAREALEQEGFGYIILPVDPLIGAKREFLDPVEMASFNSDAMKVLSSCGVVRLIQEELDRVTEQVASGKSGEDLELPHIFAKPEKCVEHAGFANPYAKAKALAALHMAEKVAQVNFPACFMLKEVEQVCLTAAAGHEIMGAAAILATQAREIEKSNDTVFRQPHAKNGTLLKKVKLYEKPE</sequence>